<proteinExistence type="inferred from homology"/>
<keyword id="KW-0067">ATP-binding</keyword>
<keyword id="KW-0963">Cytoplasm</keyword>
<keyword id="KW-0235">DNA replication</keyword>
<keyword id="KW-0238">DNA-binding</keyword>
<keyword id="KW-0446">Lipid-binding</keyword>
<keyword id="KW-0547">Nucleotide-binding</keyword>
<sequence length="589" mass="64955">MQDFWQAAAAQLERELTPQQFKTWIKPLAPVAFDEETHALRIAAPNRFKLDWVKSQFSGRITALACEYWEAQVSVQFVLDPAASGRAAAYMQPAQPGMGAGGMDRMDHHAAPGTGMGGYPGAQPAQTMGGQAPFAMPGQPAQPGYGEYPTAAAYGLGQPQYGHPTGNPAGMPSAAPVPAGARGQGMGQHPGQHHPQHNAELGEIDVVQMDPAEASARSYRAPQQGQHPHAAMGNGAAQMPGHQPSDTVHERSRLNPILTFDNFVTGKANQLARAAAIQVANNPGKSYNPLYLYGGVGLGKTHLIHSIGNHMLMENPRARIRYIHAEQYVSDVVKAYQRKAFDEFKRYYHSLDLLLIDDIQFFSGKNRTQEEFFYAFEALIANRAQVIITSDTYPKEITGIDDRLISRFDSGLTVAIEPPELEMRVAILMKKAAAENVNVPEEVAFFVAKHLRSNVRELEGALRKILAFSNFHGKDITIEVTREALKDLLTVQNRQISVENIQKTCADFYNIKVADMYSKKRPANIARPRQIAMYLAKELTQKSLPEIGELFGGRDHTTVLHAVRKIADERSKDAQLNHELHVLEQTLKG</sequence>
<accession>B2AFZ7</accession>
<dbReference type="EMBL" id="CU633749">
    <property type="protein sequence ID" value="CAP62674.1"/>
    <property type="molecule type" value="Genomic_DNA"/>
</dbReference>
<dbReference type="RefSeq" id="WP_012351344.1">
    <property type="nucleotide sequence ID" value="NC_010528.1"/>
</dbReference>
<dbReference type="SMR" id="B2AFZ7"/>
<dbReference type="GeneID" id="29761177"/>
<dbReference type="KEGG" id="cti:RALTA_A0001"/>
<dbReference type="eggNOG" id="COG0593">
    <property type="taxonomic scope" value="Bacteria"/>
</dbReference>
<dbReference type="HOGENOM" id="CLU_026910_0_1_4"/>
<dbReference type="BioCyc" id="CTAI977880:RALTA_RS00005-MONOMER"/>
<dbReference type="Proteomes" id="UP000001692">
    <property type="component" value="Chromosome 1"/>
</dbReference>
<dbReference type="GO" id="GO:0005737">
    <property type="term" value="C:cytoplasm"/>
    <property type="evidence" value="ECO:0007669"/>
    <property type="project" value="UniProtKB-SubCell"/>
</dbReference>
<dbReference type="GO" id="GO:0005886">
    <property type="term" value="C:plasma membrane"/>
    <property type="evidence" value="ECO:0007669"/>
    <property type="project" value="TreeGrafter"/>
</dbReference>
<dbReference type="GO" id="GO:0005524">
    <property type="term" value="F:ATP binding"/>
    <property type="evidence" value="ECO:0007669"/>
    <property type="project" value="UniProtKB-UniRule"/>
</dbReference>
<dbReference type="GO" id="GO:0016887">
    <property type="term" value="F:ATP hydrolysis activity"/>
    <property type="evidence" value="ECO:0007669"/>
    <property type="project" value="InterPro"/>
</dbReference>
<dbReference type="GO" id="GO:0003688">
    <property type="term" value="F:DNA replication origin binding"/>
    <property type="evidence" value="ECO:0007669"/>
    <property type="project" value="UniProtKB-UniRule"/>
</dbReference>
<dbReference type="GO" id="GO:0008289">
    <property type="term" value="F:lipid binding"/>
    <property type="evidence" value="ECO:0007669"/>
    <property type="project" value="UniProtKB-KW"/>
</dbReference>
<dbReference type="GO" id="GO:0006270">
    <property type="term" value="P:DNA replication initiation"/>
    <property type="evidence" value="ECO:0007669"/>
    <property type="project" value="UniProtKB-UniRule"/>
</dbReference>
<dbReference type="GO" id="GO:0006275">
    <property type="term" value="P:regulation of DNA replication"/>
    <property type="evidence" value="ECO:0007669"/>
    <property type="project" value="UniProtKB-UniRule"/>
</dbReference>
<dbReference type="CDD" id="cd00009">
    <property type="entry name" value="AAA"/>
    <property type="match status" value="1"/>
</dbReference>
<dbReference type="CDD" id="cd06571">
    <property type="entry name" value="Bac_DnaA_C"/>
    <property type="match status" value="1"/>
</dbReference>
<dbReference type="FunFam" id="1.10.8.60:FF:000003">
    <property type="entry name" value="Chromosomal replication initiator protein DnaA"/>
    <property type="match status" value="1"/>
</dbReference>
<dbReference type="FunFam" id="3.40.50.300:FF:000668">
    <property type="entry name" value="Chromosomal replication initiator protein DnaA"/>
    <property type="match status" value="1"/>
</dbReference>
<dbReference type="Gene3D" id="1.10.1750.10">
    <property type="match status" value="1"/>
</dbReference>
<dbReference type="Gene3D" id="1.10.8.60">
    <property type="match status" value="1"/>
</dbReference>
<dbReference type="Gene3D" id="3.30.300.180">
    <property type="match status" value="1"/>
</dbReference>
<dbReference type="Gene3D" id="3.40.50.300">
    <property type="entry name" value="P-loop containing nucleotide triphosphate hydrolases"/>
    <property type="match status" value="1"/>
</dbReference>
<dbReference type="HAMAP" id="MF_00377">
    <property type="entry name" value="DnaA_bact"/>
    <property type="match status" value="1"/>
</dbReference>
<dbReference type="InterPro" id="IPR003593">
    <property type="entry name" value="AAA+_ATPase"/>
</dbReference>
<dbReference type="InterPro" id="IPR001957">
    <property type="entry name" value="Chromosome_initiator_DnaA"/>
</dbReference>
<dbReference type="InterPro" id="IPR020591">
    <property type="entry name" value="Chromosome_initiator_DnaA-like"/>
</dbReference>
<dbReference type="InterPro" id="IPR018312">
    <property type="entry name" value="Chromosome_initiator_DnaA_CS"/>
</dbReference>
<dbReference type="InterPro" id="IPR013159">
    <property type="entry name" value="DnaA_C"/>
</dbReference>
<dbReference type="InterPro" id="IPR013317">
    <property type="entry name" value="DnaA_dom"/>
</dbReference>
<dbReference type="InterPro" id="IPR024633">
    <property type="entry name" value="DnaA_N_dom"/>
</dbReference>
<dbReference type="InterPro" id="IPR038454">
    <property type="entry name" value="DnaA_N_sf"/>
</dbReference>
<dbReference type="InterPro" id="IPR027417">
    <property type="entry name" value="P-loop_NTPase"/>
</dbReference>
<dbReference type="InterPro" id="IPR010921">
    <property type="entry name" value="Trp_repressor/repl_initiator"/>
</dbReference>
<dbReference type="NCBIfam" id="TIGR00362">
    <property type="entry name" value="DnaA"/>
    <property type="match status" value="1"/>
</dbReference>
<dbReference type="PANTHER" id="PTHR30050">
    <property type="entry name" value="CHROMOSOMAL REPLICATION INITIATOR PROTEIN DNAA"/>
    <property type="match status" value="1"/>
</dbReference>
<dbReference type="PANTHER" id="PTHR30050:SF2">
    <property type="entry name" value="CHROMOSOMAL REPLICATION INITIATOR PROTEIN DNAA"/>
    <property type="match status" value="1"/>
</dbReference>
<dbReference type="Pfam" id="PF00308">
    <property type="entry name" value="Bac_DnaA"/>
    <property type="match status" value="1"/>
</dbReference>
<dbReference type="Pfam" id="PF08299">
    <property type="entry name" value="Bac_DnaA_C"/>
    <property type="match status" value="1"/>
</dbReference>
<dbReference type="Pfam" id="PF11638">
    <property type="entry name" value="DnaA_N"/>
    <property type="match status" value="1"/>
</dbReference>
<dbReference type="PRINTS" id="PR00051">
    <property type="entry name" value="DNAA"/>
</dbReference>
<dbReference type="SMART" id="SM00382">
    <property type="entry name" value="AAA"/>
    <property type="match status" value="1"/>
</dbReference>
<dbReference type="SMART" id="SM00760">
    <property type="entry name" value="Bac_DnaA_C"/>
    <property type="match status" value="1"/>
</dbReference>
<dbReference type="SUPFAM" id="SSF52540">
    <property type="entry name" value="P-loop containing nucleoside triphosphate hydrolases"/>
    <property type="match status" value="1"/>
</dbReference>
<dbReference type="SUPFAM" id="SSF48295">
    <property type="entry name" value="TrpR-like"/>
    <property type="match status" value="1"/>
</dbReference>
<dbReference type="PROSITE" id="PS01008">
    <property type="entry name" value="DNAA"/>
    <property type="match status" value="1"/>
</dbReference>
<evidence type="ECO:0000255" key="1">
    <source>
        <dbReference type="HAMAP-Rule" id="MF_00377"/>
    </source>
</evidence>
<evidence type="ECO:0000256" key="2">
    <source>
        <dbReference type="SAM" id="MobiDB-lite"/>
    </source>
</evidence>
<reference key="1">
    <citation type="journal article" date="2008" name="Genome Res.">
        <title>Genome sequence of the beta-rhizobium Cupriavidus taiwanensis and comparative genomics of rhizobia.</title>
        <authorList>
            <person name="Amadou C."/>
            <person name="Pascal G."/>
            <person name="Mangenot S."/>
            <person name="Glew M."/>
            <person name="Bontemps C."/>
            <person name="Capela D."/>
            <person name="Carrere S."/>
            <person name="Cruveiller S."/>
            <person name="Dossat C."/>
            <person name="Lajus A."/>
            <person name="Marchetti M."/>
            <person name="Poinsot V."/>
            <person name="Rouy Z."/>
            <person name="Servin B."/>
            <person name="Saad M."/>
            <person name="Schenowitz C."/>
            <person name="Barbe V."/>
            <person name="Batut J."/>
            <person name="Medigue C."/>
            <person name="Masson-Boivin C."/>
        </authorList>
    </citation>
    <scope>NUCLEOTIDE SEQUENCE [LARGE SCALE GENOMIC DNA]</scope>
    <source>
        <strain>DSM 17343 / BCRC 17206 / CCUG 44338 / CIP 107171 / LMG 19424 / R1</strain>
    </source>
</reference>
<protein>
    <recommendedName>
        <fullName evidence="1">Chromosomal replication initiator protein DnaA</fullName>
    </recommendedName>
</protein>
<organism>
    <name type="scientific">Cupriavidus taiwanensis (strain DSM 17343 / BCRC 17206 / CCUG 44338 / CIP 107171 / LMG 19424 / R1)</name>
    <name type="common">Ralstonia taiwanensis (strain LMG 19424)</name>
    <dbReference type="NCBI Taxonomy" id="977880"/>
    <lineage>
        <taxon>Bacteria</taxon>
        <taxon>Pseudomonadati</taxon>
        <taxon>Pseudomonadota</taxon>
        <taxon>Betaproteobacteria</taxon>
        <taxon>Burkholderiales</taxon>
        <taxon>Burkholderiaceae</taxon>
        <taxon>Cupriavidus</taxon>
    </lineage>
</organism>
<comment type="function">
    <text evidence="1">Plays an essential role in the initiation and regulation of chromosomal replication. ATP-DnaA binds to the origin of replication (oriC) to initiate formation of the DNA replication initiation complex once per cell cycle. Binds the DnaA box (a 9 base pair repeat at the origin) and separates the double-stranded (ds)DNA. Forms a right-handed helical filament on oriC DNA; dsDNA binds to the exterior of the filament while single-stranded (ss)DNA is stabiized in the filament's interior. The ATP-DnaA-oriC complex binds and stabilizes one strand of the AT-rich DNA unwinding element (DUE), permitting loading of DNA polymerase. After initiation quickly degrades to an ADP-DnaA complex that is not apt for DNA replication. Binds acidic phospholipids.</text>
</comment>
<comment type="subunit">
    <text evidence="1">Oligomerizes as a right-handed, spiral filament on DNA at oriC.</text>
</comment>
<comment type="subcellular location">
    <subcellularLocation>
        <location evidence="1">Cytoplasm</location>
    </subcellularLocation>
</comment>
<comment type="domain">
    <text evidence="1">Domain I is involved in oligomerization and binding regulators, domain II is flexibile and of varying length in different bacteria, domain III forms the AAA+ region, while domain IV binds dsDNA.</text>
</comment>
<comment type="similarity">
    <text evidence="1">Belongs to the DnaA family.</text>
</comment>
<feature type="chain" id="PRO_1000121968" description="Chromosomal replication initiator protein DnaA">
    <location>
        <begin position="1"/>
        <end position="589"/>
    </location>
</feature>
<feature type="region of interest" description="Domain I, interacts with DnaA modulators" evidence="1">
    <location>
        <begin position="1"/>
        <end position="73"/>
    </location>
</feature>
<feature type="region of interest" description="Domain II" evidence="1">
    <location>
        <begin position="73"/>
        <end position="252"/>
    </location>
</feature>
<feature type="region of interest" description="Disordered" evidence="2">
    <location>
        <begin position="108"/>
        <end position="143"/>
    </location>
</feature>
<feature type="region of interest" description="Disordered" evidence="2">
    <location>
        <begin position="156"/>
        <end position="197"/>
    </location>
</feature>
<feature type="region of interest" description="Disordered" evidence="2">
    <location>
        <begin position="214"/>
        <end position="249"/>
    </location>
</feature>
<feature type="region of interest" description="Domain III, AAA+ region" evidence="1">
    <location>
        <begin position="253"/>
        <end position="469"/>
    </location>
</feature>
<feature type="region of interest" description="Domain IV, binds dsDNA" evidence="1">
    <location>
        <begin position="470"/>
        <end position="589"/>
    </location>
</feature>
<feature type="binding site" evidence="1">
    <location>
        <position position="297"/>
    </location>
    <ligand>
        <name>ATP</name>
        <dbReference type="ChEBI" id="CHEBI:30616"/>
    </ligand>
</feature>
<feature type="binding site" evidence="1">
    <location>
        <position position="299"/>
    </location>
    <ligand>
        <name>ATP</name>
        <dbReference type="ChEBI" id="CHEBI:30616"/>
    </ligand>
</feature>
<feature type="binding site" evidence="1">
    <location>
        <position position="300"/>
    </location>
    <ligand>
        <name>ATP</name>
        <dbReference type="ChEBI" id="CHEBI:30616"/>
    </ligand>
</feature>
<feature type="binding site" evidence="1">
    <location>
        <position position="301"/>
    </location>
    <ligand>
        <name>ATP</name>
        <dbReference type="ChEBI" id="CHEBI:30616"/>
    </ligand>
</feature>
<name>DNAA_CUPTR</name>
<gene>
    <name evidence="1" type="primary">dnaA</name>
    <name type="ordered locus">RALTA_A0001</name>
</gene>